<comment type="function">
    <text evidence="4 5 7 10">Storage protein of tuber. Involved in protection against oxidative stress (Probable). Has carbonate dehydratase, trypsin inhibitor, dehydroascorbate (DHA) reductase and monodehydroascorbate (MDA) reductase activities (PubMed:22195572). Catalyzes the reactions of carbonate dehydratase and DHA reductase independently of zinc and glutathione (GSH). The coupled reaction is capable of recycling a plant antioxidant ascorbate using ubiquitous compounds H(2)O and CO(2) (PubMed:25747844). Exhibits antioxidant activity. Able to scavenge 1,1-diphenyl-2-picrylhydrazyl (DPPH) radical. Exhibits immunomodulatory activity. Activates Toll-like receptor 4 signaling pathways by up-regulating the gene expression of pro-inflammatory cytokines, such as tumor necrosis factor alpha, interleukin-1 beta and interleukin-6, and chemokines RANTES and MCP-1, in mouse RAW 264.7 macrophages. Stimulates the phagocytosis of E.coli by the LPS-treated mouse macrophages (PubMed:22796748).</text>
</comment>
<comment type="catalytic activity">
    <reaction evidence="4 7">
        <text>hydrogencarbonate + H(+) = CO2 + H2O</text>
        <dbReference type="Rhea" id="RHEA:10748"/>
        <dbReference type="ChEBI" id="CHEBI:15377"/>
        <dbReference type="ChEBI" id="CHEBI:15378"/>
        <dbReference type="ChEBI" id="CHEBI:16526"/>
        <dbReference type="ChEBI" id="CHEBI:17544"/>
        <dbReference type="EC" id="4.2.1.1"/>
    </reaction>
</comment>
<comment type="catalytic activity">
    <reaction evidence="4">
        <text>2 monodehydro-L-ascorbate radical + NADH + H(+) = 2 L-ascorbate + NAD(+)</text>
        <dbReference type="Rhea" id="RHEA:14581"/>
        <dbReference type="ChEBI" id="CHEBI:15378"/>
        <dbReference type="ChEBI" id="CHEBI:38290"/>
        <dbReference type="ChEBI" id="CHEBI:57540"/>
        <dbReference type="ChEBI" id="CHEBI:57945"/>
        <dbReference type="ChEBI" id="CHEBI:59513"/>
        <dbReference type="EC" id="1.6.5.4"/>
    </reaction>
</comment>
<comment type="activity regulation">
    <text evidence="7">The carbonate dehydratase activity is not substantially changed by the addition of Zn(2+).</text>
</comment>
<comment type="biophysicochemical properties">
    <kinetics>
        <KM evidence="7">3.49 mM for dehydroascorbate (DHA) (at ph 7.0 and 30 degrees Celsius)</KM>
        <KM evidence="7">10.2 mM for sodium bicarbonate (at ph 7.1 and 4 degrees Celsius)</KM>
        <text evidence="7">kcat is 0.0152 min(-1) for DHA. kcat is 30500 min(-1) for sodium bicarbonate.</text>
    </kinetics>
</comment>
<comment type="subunit">
    <text evidence="1 6">Monomer (PubMed:22806688). Homodimer (By similarity).</text>
</comment>
<comment type="tissue specificity">
    <text evidence="6">Expressed in tuber (at protein level).</text>
</comment>
<comment type="PTM">
    <text evidence="1">Not glycosylated.</text>
</comment>
<comment type="allergen">
    <text evidence="10">Causes an allergic reaction in human (Probable).</text>
</comment>
<comment type="similarity">
    <text evidence="10">Belongs to the alpha-carbonic anhydrase family.</text>
</comment>
<comment type="caution">
    <text evidence="11">Despite overall sequence similarity to the typical alpha class carbonic anhydrases, lacks one of the three conserved catalytic zinc-ligand histidines. The carbonate dehydratase activity of this protein is zinc-independent.</text>
</comment>
<name>DIOA3_DIOJA</name>
<accession>A7MAQ2</accession>
<sequence length="271" mass="30876">MSSSTLLHLLLLSSLLFSCLSCLTNVEDEFSYIEGNPNGPENWGNLKPEWETCGKGMEQSPIQLRDNRVIFDQTLGKLRRNYRAVDARLRNSGHDVLVDFKGNAGSLSINRVEYQLKRIHFHSPSEHEMNGERFDLEAQLVHESQDQKRAVVSILFRFGRADPFLSDLEDFIKQFSNSQKNEINAGVVDPNQLQIDDSAYYRYMGSFTAPPCTEGISWTVMRKVATVSPRQVLLLKQAVNENAINNARPLQPTNFRSVFYFEQLKSKLGVI</sequence>
<protein>
    <recommendedName>
        <fullName evidence="10">Dioscorin dioA3</fullName>
        <ecNumber evidence="4">1.6.5.4</ecNumber>
        <ecNumber evidence="4 7">4.2.1.1</ecNumber>
    </recommendedName>
    <alternativeName>
        <fullName evidence="9">Dj-dio5</fullName>
    </alternativeName>
    <alternativeName>
        <fullName evidence="8 9">Dj-dioA3</fullName>
    </alternativeName>
    <alternativeName>
        <fullName evidence="10">Tuber storage protein dioA3</fullName>
    </alternativeName>
</protein>
<feature type="signal peptide" evidence="2">
    <location>
        <begin position="1"/>
        <end position="21"/>
    </location>
</feature>
<feature type="chain" id="PRO_5002712224" description="Dioscorin dioA3" evidence="2">
    <location>
        <begin position="22"/>
        <end position="271"/>
    </location>
</feature>
<feature type="domain" description="Alpha-carbonic anhydrase" evidence="3">
    <location>
        <begin position="28"/>
        <end position="262"/>
    </location>
</feature>
<feature type="active site" description="Proton acceptor" evidence="3">
    <location>
        <position position="94"/>
    </location>
</feature>
<feature type="binding site" evidence="7 13">
    <location>
        <position position="95"/>
    </location>
    <ligand>
        <name>L-ascorbate</name>
        <dbReference type="ChEBI" id="CHEBI:38290"/>
    </ligand>
</feature>
<feature type="binding site" evidence="7 13">
    <location>
        <begin position="120"/>
        <end position="122"/>
    </location>
    <ligand>
        <name>L-ascorbate</name>
        <dbReference type="ChEBI" id="CHEBI:38290"/>
    </ligand>
</feature>
<feature type="binding site" evidence="7 13">
    <location>
        <position position="139"/>
    </location>
    <ligand>
        <name>L-ascorbate</name>
        <dbReference type="ChEBI" id="CHEBI:38290"/>
    </ligand>
</feature>
<feature type="binding site" evidence="7 13">
    <location>
        <begin position="208"/>
        <end position="209"/>
    </location>
    <ligand>
        <name>L-ascorbate</name>
        <dbReference type="ChEBI" id="CHEBI:38290"/>
    </ligand>
</feature>
<feature type="disulfide bond" evidence="7 13 14">
    <location>
        <begin position="53"/>
        <end position="212"/>
    </location>
</feature>
<feature type="mutagenesis site" description="Loss of dehydroascorbate (DHA) reductase and carbonate dehydratase activity." evidence="7">
    <original>D</original>
    <variation>A</variation>
    <location>
        <position position="95"/>
    </location>
</feature>
<feature type="mutagenesis site" description="Loss of dehydroascorbate (DHA) reductase activity and carbonate dehydratase activity." evidence="7">
    <original>H</original>
    <variation>A</variation>
    <location>
        <position position="120"/>
    </location>
</feature>
<feature type="mutagenesis site" description="No change in dehydroascorbate (DHA) reductase or carbonate dehydratase activity." evidence="7">
    <original>H</original>
    <variation>A</variation>
    <location>
        <position position="122"/>
    </location>
</feature>
<feature type="mutagenesis site" description="Slight decrease of dehydroascorbate (DHA) reductase activity." evidence="7">
    <original>Q</original>
    <variation>A</variation>
    <location>
        <position position="139"/>
    </location>
</feature>
<feature type="mutagenesis site" description="Slight decrease of dehydroascorbate (DHA) reductase activity. Significant decrease of dehydroascorbate (DHA) reductase activity by the addition of Zn(2+). Increase of carbonate dehydratase activity by the addition of Zn(2+)." evidence="7">
    <original>Q</original>
    <variation>H</variation>
    <location>
        <position position="139"/>
    </location>
</feature>
<feature type="helix" evidence="15">
    <location>
        <begin position="40"/>
        <end position="42"/>
    </location>
</feature>
<feature type="helix" evidence="15">
    <location>
        <begin position="43"/>
        <end position="46"/>
    </location>
</feature>
<feature type="helix" evidence="15">
    <location>
        <begin position="48"/>
        <end position="50"/>
    </location>
</feature>
<feature type="helix" evidence="15">
    <location>
        <begin position="51"/>
        <end position="55"/>
    </location>
</feature>
<feature type="helix" evidence="15">
    <location>
        <begin position="66"/>
        <end position="68"/>
    </location>
</feature>
<feature type="helix" evidence="15">
    <location>
        <begin position="73"/>
        <end position="75"/>
    </location>
</feature>
<feature type="strand" evidence="15">
    <location>
        <begin position="79"/>
        <end position="82"/>
    </location>
</feature>
<feature type="strand" evidence="15">
    <location>
        <begin position="85"/>
        <end position="91"/>
    </location>
</feature>
<feature type="strand" evidence="15">
    <location>
        <begin position="96"/>
        <end position="102"/>
    </location>
</feature>
<feature type="strand" evidence="15">
    <location>
        <begin position="105"/>
        <end position="109"/>
    </location>
</feature>
<feature type="strand" evidence="15">
    <location>
        <begin position="112"/>
        <end position="124"/>
    </location>
</feature>
<feature type="strand" evidence="15">
    <location>
        <begin position="126"/>
        <end position="129"/>
    </location>
</feature>
<feature type="strand" evidence="15">
    <location>
        <begin position="135"/>
        <end position="143"/>
    </location>
</feature>
<feature type="strand" evidence="15">
    <location>
        <begin position="149"/>
        <end position="160"/>
    </location>
</feature>
<feature type="helix" evidence="15">
    <location>
        <begin position="163"/>
        <end position="166"/>
    </location>
</feature>
<feature type="helix" evidence="15">
    <location>
        <begin position="169"/>
        <end position="173"/>
    </location>
</feature>
<feature type="turn" evidence="15">
    <location>
        <begin position="174"/>
        <end position="176"/>
    </location>
</feature>
<feature type="strand" evidence="15">
    <location>
        <begin position="177"/>
        <end position="179"/>
    </location>
</feature>
<feature type="strand" evidence="15">
    <location>
        <begin position="181"/>
        <end position="188"/>
    </location>
</feature>
<feature type="helix" evidence="15">
    <location>
        <begin position="190"/>
        <end position="192"/>
    </location>
</feature>
<feature type="strand" evidence="15">
    <location>
        <begin position="199"/>
        <end position="206"/>
    </location>
</feature>
<feature type="strand" evidence="15">
    <location>
        <begin position="214"/>
        <end position="223"/>
    </location>
</feature>
<feature type="strand" evidence="15">
    <location>
        <begin position="225"/>
        <end position="227"/>
    </location>
</feature>
<feature type="helix" evidence="15">
    <location>
        <begin position="229"/>
        <end position="237"/>
    </location>
</feature>
<feature type="helix" evidence="15">
    <location>
        <begin position="241"/>
        <end position="243"/>
    </location>
</feature>
<feature type="strand" evidence="15">
    <location>
        <begin position="258"/>
        <end position="262"/>
    </location>
</feature>
<organism evidence="12">
    <name type="scientific">Dioscorea japonica</name>
    <name type="common">Japanese yam</name>
    <dbReference type="NCBI Taxonomy" id="4673"/>
    <lineage>
        <taxon>Eukaryota</taxon>
        <taxon>Viridiplantae</taxon>
        <taxon>Streptophyta</taxon>
        <taxon>Embryophyta</taxon>
        <taxon>Tracheophyta</taxon>
        <taxon>Spermatophyta</taxon>
        <taxon>Magnoliopsida</taxon>
        <taxon>Liliopsida</taxon>
        <taxon>Dioscoreales</taxon>
        <taxon>Dioscoreaceae</taxon>
        <taxon>Dioscorea</taxon>
    </lineage>
</organism>
<reference evidence="12" key="1">
    <citation type="submission" date="2007-08" db="EMBL/GenBank/DDBJ databases">
        <title>Isolation and characterization of a gene family encoding the major tuber storage protein dioscorin of Japanese yam (Dioscorea japonica).</title>
        <authorList>
            <person name="Lin K.C."/>
            <person name="Lin K.W."/>
            <person name="Chen K.S."/>
        </authorList>
    </citation>
    <scope>NUCLEOTIDE SEQUENCE [MRNA]</scope>
</reference>
<reference key="2">
    <citation type="journal article" date="2013" name="J. Sci. Food Agric.">
        <title>Molecular cloning, structural analysis and mass spectrometric identification of native dioscorins of various yam species.</title>
        <authorList>
            <person name="Tsai W.Y."/>
            <person name="Jheng Y.J."/>
            <person name="Chen K.H."/>
            <person name="Lin K.W."/>
            <person name="Ho Y.P."/>
            <person name="Yang C.C."/>
            <person name="Lin K.C."/>
        </authorList>
    </citation>
    <scope>PROTEIN SEQUENCE OF 56-65; 69-77; 119-133; 181-202; 203-222; 237-256 AND 257-265</scope>
    <scope>SUBUNIT</scope>
    <scope>TISSUE SPECIFICITY</scope>
    <scope>IDENTIFICATION BY MASS SPECTROMETRY</scope>
    <scope>DISULFIDE BOND</scope>
    <source>
        <tissue evidence="9">Tuber</tissue>
    </source>
</reference>
<reference key="3">
    <citation type="journal article" date="2012" name="Acta Crystallogr. F">
        <title>Crystallization and preliminary X-ray crystallographic analysis of dioscorin from Dioscorea japonica.</title>
        <authorList>
            <person name="Xue Y.L."/>
            <person name="Miyakawa T."/>
            <person name="Sawano Y."/>
            <person name="Tanokura M."/>
        </authorList>
    </citation>
    <scope>CRYSTALLIZATION</scope>
</reference>
<reference key="4">
    <citation type="journal article" date="2012" name="Plant Sci.">
        <title>Cloning of genes and enzymatic characterizations of novel dioscorin isoforms from Dioscorea japonica.</title>
        <authorList>
            <person name="Xue Y.L."/>
            <person name="Miyakawa T."/>
            <person name="Sawano Y."/>
            <person name="Tanokura M."/>
        </authorList>
    </citation>
    <scope>FUNCTION</scope>
    <scope>CATALYTIC ACTIVITY</scope>
</reference>
<reference key="5">
    <citation type="journal article" date="2012" name="Protein Expr. Purif.">
        <title>Recombinant dioscorins of the yam storage protein expressed in Escherichia coli exhibit antioxidant and immunomodulatory activities.</title>
        <authorList>
            <person name="Jheng Y.J."/>
            <person name="Tsai W.Y."/>
            <person name="Chen K.H."/>
            <person name="Lin K.W."/>
            <person name="Chyan C.L."/>
            <person name="Yang C.C."/>
            <person name="Lin K.C."/>
        </authorList>
    </citation>
    <scope>FUNCTION</scope>
    <scope>DISULFIDE BOND</scope>
</reference>
<reference evidence="13 14" key="6">
    <citation type="journal article" date="2015" name="Mol. Plant">
        <title>Yam Tuber Storage Protein Reduces Plant Oxidants Using the Coupled Reactions as Carbonic Anhydrase and Dehydroascorbate Reductase.</title>
        <authorList>
            <person name="Xue Y.L."/>
            <person name="Miyakawa T."/>
            <person name="Nakamura A."/>
            <person name="Hatano K."/>
            <person name="Sawano Y."/>
            <person name="Tanokura M."/>
        </authorList>
    </citation>
    <scope>X-RAY CRYSTALLOGRAPHY (2.11 ANGSTROMS) OF 26-271 AND IN COMPLEX WITH ASCORBIC ACID</scope>
    <scope>CATALYTIC ACTIVITY</scope>
    <scope>ACTIVITY REGULATION</scope>
    <scope>BIOPHYSICOCHEMICAL PROPERTIES</scope>
    <scope>DISULFIDE BOND</scope>
    <scope>MUTAGENESIS OF ASP-95; HIS-120; HIS-122 AND GLN-139</scope>
    <scope>REACTION MECHANISM</scope>
</reference>
<keyword id="KW-0002">3D-structure</keyword>
<keyword id="KW-0020">Allergen</keyword>
<keyword id="KW-0049">Antioxidant</keyword>
<keyword id="KW-0903">Direct protein sequencing</keyword>
<keyword id="KW-1015">Disulfide bond</keyword>
<keyword id="KW-0456">Lyase</keyword>
<keyword id="KW-0560">Oxidoreductase</keyword>
<keyword id="KW-0732">Signal</keyword>
<keyword id="KW-0758">Storage protein</keyword>
<gene>
    <name evidence="9" type="primary">dioA3</name>
    <name evidence="12" type="synonym">dio5</name>
</gene>
<evidence type="ECO:0000250" key="1">
    <source>
        <dbReference type="UniProtKB" id="Q75N34"/>
    </source>
</evidence>
<evidence type="ECO:0000255" key="2"/>
<evidence type="ECO:0000255" key="3">
    <source>
        <dbReference type="PROSITE-ProRule" id="PRU01134"/>
    </source>
</evidence>
<evidence type="ECO:0000269" key="4">
    <source>
    </source>
</evidence>
<evidence type="ECO:0000269" key="5">
    <source>
    </source>
</evidence>
<evidence type="ECO:0000269" key="6">
    <source>
    </source>
</evidence>
<evidence type="ECO:0000269" key="7">
    <source>
    </source>
</evidence>
<evidence type="ECO:0000303" key="8">
    <source>
    </source>
</evidence>
<evidence type="ECO:0000303" key="9">
    <source>
    </source>
</evidence>
<evidence type="ECO:0000305" key="10"/>
<evidence type="ECO:0000305" key="11">
    <source>
    </source>
</evidence>
<evidence type="ECO:0000312" key="12">
    <source>
        <dbReference type="EMBL" id="CAO98738.1"/>
    </source>
</evidence>
<evidence type="ECO:0007744" key="13">
    <source>
        <dbReference type="PDB" id="4TWL"/>
    </source>
</evidence>
<evidence type="ECO:0007744" key="14">
    <source>
        <dbReference type="PDB" id="4TWM"/>
    </source>
</evidence>
<evidence type="ECO:0007829" key="15">
    <source>
        <dbReference type="PDB" id="4TWL"/>
    </source>
</evidence>
<dbReference type="EC" id="1.6.5.4" evidence="4"/>
<dbReference type="EC" id="4.2.1.1" evidence="4 7"/>
<dbReference type="EMBL" id="AM849820">
    <property type="protein sequence ID" value="CAO98738.1"/>
    <property type="molecule type" value="mRNA"/>
</dbReference>
<dbReference type="PDB" id="4TWL">
    <property type="method" value="X-ray"/>
    <property type="resolution" value="2.11 A"/>
    <property type="chains" value="A/B=26-271"/>
</dbReference>
<dbReference type="PDB" id="4TWM">
    <property type="method" value="X-ray"/>
    <property type="resolution" value="2.11 A"/>
    <property type="chains" value="A/B=26-271"/>
</dbReference>
<dbReference type="PDBsum" id="4TWL"/>
<dbReference type="PDBsum" id="4TWM"/>
<dbReference type="SMR" id="A7MAQ2"/>
<dbReference type="EvolutionaryTrace" id="A7MAQ2"/>
<dbReference type="GO" id="GO:0016209">
    <property type="term" value="F:antioxidant activity"/>
    <property type="evidence" value="ECO:0000314"/>
    <property type="project" value="UniProtKB"/>
</dbReference>
<dbReference type="GO" id="GO:0004089">
    <property type="term" value="F:carbonate dehydratase activity"/>
    <property type="evidence" value="ECO:0000314"/>
    <property type="project" value="UniProtKB"/>
</dbReference>
<dbReference type="GO" id="GO:0031418">
    <property type="term" value="F:L-ascorbic acid binding"/>
    <property type="evidence" value="ECO:0000314"/>
    <property type="project" value="UniProtKB"/>
</dbReference>
<dbReference type="GO" id="GO:0016656">
    <property type="term" value="F:monodehydroascorbate reductase (NADH) activity"/>
    <property type="evidence" value="ECO:0000314"/>
    <property type="project" value="UniProtKB"/>
</dbReference>
<dbReference type="GO" id="GO:0045735">
    <property type="term" value="F:nutrient reservoir activity"/>
    <property type="evidence" value="ECO:0007669"/>
    <property type="project" value="UniProtKB-KW"/>
</dbReference>
<dbReference type="GO" id="GO:0042803">
    <property type="term" value="F:protein homodimerization activity"/>
    <property type="evidence" value="ECO:0000250"/>
    <property type="project" value="UniProtKB"/>
</dbReference>
<dbReference type="GO" id="GO:0004867">
    <property type="term" value="F:serine-type endopeptidase inhibitor activity"/>
    <property type="evidence" value="ECO:0000314"/>
    <property type="project" value="UniProtKB"/>
</dbReference>
<dbReference type="GO" id="GO:0008270">
    <property type="term" value="F:zinc ion binding"/>
    <property type="evidence" value="ECO:0007669"/>
    <property type="project" value="InterPro"/>
</dbReference>
<dbReference type="GO" id="GO:0015976">
    <property type="term" value="P:carbon utilization"/>
    <property type="evidence" value="ECO:0000305"/>
    <property type="project" value="UniProtKB"/>
</dbReference>
<dbReference type="GO" id="GO:0098869">
    <property type="term" value="P:cellular oxidant detoxification"/>
    <property type="evidence" value="ECO:0000305"/>
    <property type="project" value="UniProtKB"/>
</dbReference>
<dbReference type="GO" id="GO:0071244">
    <property type="term" value="P:cellular response to carbon dioxide"/>
    <property type="evidence" value="ECO:0000305"/>
    <property type="project" value="UniProtKB"/>
</dbReference>
<dbReference type="GO" id="GO:0006730">
    <property type="term" value="P:one-carbon metabolic process"/>
    <property type="evidence" value="ECO:0007669"/>
    <property type="project" value="TreeGrafter"/>
</dbReference>
<dbReference type="GO" id="GO:0010628">
    <property type="term" value="P:positive regulation of gene expression"/>
    <property type="evidence" value="ECO:0000270"/>
    <property type="project" value="UniProtKB"/>
</dbReference>
<dbReference type="GO" id="GO:0050766">
    <property type="term" value="P:positive regulation of phagocytosis"/>
    <property type="evidence" value="ECO:0000314"/>
    <property type="project" value="UniProtKB"/>
</dbReference>
<dbReference type="GO" id="GO:0000305">
    <property type="term" value="P:response to oxygen radical"/>
    <property type="evidence" value="ECO:0000305"/>
    <property type="project" value="UniProtKB"/>
</dbReference>
<dbReference type="CDD" id="cd03124">
    <property type="entry name" value="alpha_CA_prokaryotic_like"/>
    <property type="match status" value="1"/>
</dbReference>
<dbReference type="Gene3D" id="3.10.200.10">
    <property type="entry name" value="Alpha carbonic anhydrase"/>
    <property type="match status" value="1"/>
</dbReference>
<dbReference type="InterPro" id="IPR041891">
    <property type="entry name" value="Alpha_CA_prokaryot-like"/>
</dbReference>
<dbReference type="InterPro" id="IPR001148">
    <property type="entry name" value="CA_dom"/>
</dbReference>
<dbReference type="InterPro" id="IPR036398">
    <property type="entry name" value="CA_dom_sf"/>
</dbReference>
<dbReference type="InterPro" id="IPR023561">
    <property type="entry name" value="Carbonic_anhydrase_a-class"/>
</dbReference>
<dbReference type="PANTHER" id="PTHR18952">
    <property type="entry name" value="CARBONIC ANHYDRASE"/>
    <property type="match status" value="1"/>
</dbReference>
<dbReference type="PANTHER" id="PTHR18952:SF253">
    <property type="entry name" value="OS08G0470200 PROTEIN"/>
    <property type="match status" value="1"/>
</dbReference>
<dbReference type="Pfam" id="PF00194">
    <property type="entry name" value="Carb_anhydrase"/>
    <property type="match status" value="1"/>
</dbReference>
<dbReference type="SMART" id="SM01057">
    <property type="entry name" value="Carb_anhydrase"/>
    <property type="match status" value="1"/>
</dbReference>
<dbReference type="SUPFAM" id="SSF51069">
    <property type="entry name" value="Carbonic anhydrase"/>
    <property type="match status" value="1"/>
</dbReference>
<dbReference type="PROSITE" id="PS51144">
    <property type="entry name" value="ALPHA_CA_2"/>
    <property type="match status" value="1"/>
</dbReference>
<proteinExistence type="evidence at protein level"/>